<gene>
    <name evidence="1" type="primary">dapD</name>
    <name type="ordered locus">YPTB3006</name>
</gene>
<sequence>MQQLQNVIETAFERRADITPANVDTVTREAITHVIDLLDTGALRVAEKIDGQWVTHQWLKKAVLLSFRINDNQVMEGAETRYYDKVPMKFAGYDEARFQHEGFRVVPPATVRKGAFIARNTVLMPSYVNIGAFVDEGTMVDTWATVGSCAQIGKNVHLSGGVGIGGVLEPLQANPTIIEDNCFVGARSEVVEGVIVEEGSVISMGVFIGQSTRIYDRETGEVHYGRVPAGSVVVSGNLPSKDGSYSLYCAVIVKKVDAKTRSKVGINELLRTID</sequence>
<name>DAPD_YERPS</name>
<feature type="chain" id="PRO_0000196979" description="2,3,4,5-tetrahydropyridine-2,6-dicarboxylate N-succinyltransferase">
    <location>
        <begin position="1"/>
        <end position="274"/>
    </location>
</feature>
<feature type="binding site" evidence="1">
    <location>
        <position position="104"/>
    </location>
    <ligand>
        <name>substrate</name>
    </ligand>
</feature>
<feature type="binding site" evidence="1">
    <location>
        <position position="141"/>
    </location>
    <ligand>
        <name>substrate</name>
    </ligand>
</feature>
<dbReference type="EC" id="2.3.1.117" evidence="1"/>
<dbReference type="EMBL" id="BX936398">
    <property type="protein sequence ID" value="CAH22244.1"/>
    <property type="molecule type" value="Genomic_DNA"/>
</dbReference>
<dbReference type="RefSeq" id="WP_011192864.1">
    <property type="nucleotide sequence ID" value="NC_006155.1"/>
</dbReference>
<dbReference type="SMR" id="Q667I6"/>
<dbReference type="KEGG" id="ypo:BZ17_3615"/>
<dbReference type="KEGG" id="yps:YPTB3006"/>
<dbReference type="PATRIC" id="fig|273123.14.peg.3795"/>
<dbReference type="UniPathway" id="UPA00034">
    <property type="reaction ID" value="UER00019"/>
</dbReference>
<dbReference type="Proteomes" id="UP000001011">
    <property type="component" value="Chromosome"/>
</dbReference>
<dbReference type="GO" id="GO:0005737">
    <property type="term" value="C:cytoplasm"/>
    <property type="evidence" value="ECO:0007669"/>
    <property type="project" value="UniProtKB-SubCell"/>
</dbReference>
<dbReference type="GO" id="GO:0008666">
    <property type="term" value="F:2,3,4,5-tetrahydropyridine-2,6-dicarboxylate N-succinyltransferase activity"/>
    <property type="evidence" value="ECO:0007669"/>
    <property type="project" value="UniProtKB-UniRule"/>
</dbReference>
<dbReference type="GO" id="GO:0016779">
    <property type="term" value="F:nucleotidyltransferase activity"/>
    <property type="evidence" value="ECO:0007669"/>
    <property type="project" value="TreeGrafter"/>
</dbReference>
<dbReference type="GO" id="GO:0019877">
    <property type="term" value="P:diaminopimelate biosynthetic process"/>
    <property type="evidence" value="ECO:0007669"/>
    <property type="project" value="UniProtKB-UniRule"/>
</dbReference>
<dbReference type="GO" id="GO:0009089">
    <property type="term" value="P:lysine biosynthetic process via diaminopimelate"/>
    <property type="evidence" value="ECO:0007669"/>
    <property type="project" value="UniProtKB-UniRule"/>
</dbReference>
<dbReference type="CDD" id="cd03350">
    <property type="entry name" value="LbH_THP_succinylT"/>
    <property type="match status" value="1"/>
</dbReference>
<dbReference type="FunFam" id="2.160.10.10:FF:000004">
    <property type="entry name" value="2,3,4,5-tetrahydropyridine-2,6-dicarboxylate N-succinyltransferase"/>
    <property type="match status" value="1"/>
</dbReference>
<dbReference type="Gene3D" id="2.160.10.10">
    <property type="entry name" value="Hexapeptide repeat proteins"/>
    <property type="match status" value="1"/>
</dbReference>
<dbReference type="Gene3D" id="1.10.166.10">
    <property type="entry name" value="Tetrahydrodipicolinate-N-succinyltransferase, N-terminal domain"/>
    <property type="match status" value="1"/>
</dbReference>
<dbReference type="HAMAP" id="MF_00811">
    <property type="entry name" value="DapD"/>
    <property type="match status" value="1"/>
</dbReference>
<dbReference type="InterPro" id="IPR005664">
    <property type="entry name" value="DapD_Trfase_Hexpep_rpt_fam"/>
</dbReference>
<dbReference type="InterPro" id="IPR001451">
    <property type="entry name" value="Hexapep"/>
</dbReference>
<dbReference type="InterPro" id="IPR018357">
    <property type="entry name" value="Hexapep_transf_CS"/>
</dbReference>
<dbReference type="InterPro" id="IPR023180">
    <property type="entry name" value="THP_succinylTrfase_dom1"/>
</dbReference>
<dbReference type="InterPro" id="IPR037133">
    <property type="entry name" value="THP_succinylTrfase_N_sf"/>
</dbReference>
<dbReference type="InterPro" id="IPR011004">
    <property type="entry name" value="Trimer_LpxA-like_sf"/>
</dbReference>
<dbReference type="NCBIfam" id="TIGR00965">
    <property type="entry name" value="dapD"/>
    <property type="match status" value="1"/>
</dbReference>
<dbReference type="NCBIfam" id="NF008808">
    <property type="entry name" value="PRK11830.1"/>
    <property type="match status" value="1"/>
</dbReference>
<dbReference type="PANTHER" id="PTHR19136:SF52">
    <property type="entry name" value="2,3,4,5-TETRAHYDROPYRIDINE-2,6-DICARBOXYLATE N-SUCCINYLTRANSFERASE"/>
    <property type="match status" value="1"/>
</dbReference>
<dbReference type="PANTHER" id="PTHR19136">
    <property type="entry name" value="MOLYBDENUM COFACTOR GUANYLYLTRANSFERASE"/>
    <property type="match status" value="1"/>
</dbReference>
<dbReference type="Pfam" id="PF14602">
    <property type="entry name" value="Hexapep_2"/>
    <property type="match status" value="1"/>
</dbReference>
<dbReference type="Pfam" id="PF14805">
    <property type="entry name" value="THDPS_N_2"/>
    <property type="match status" value="1"/>
</dbReference>
<dbReference type="SUPFAM" id="SSF51161">
    <property type="entry name" value="Trimeric LpxA-like enzymes"/>
    <property type="match status" value="1"/>
</dbReference>
<dbReference type="PROSITE" id="PS00101">
    <property type="entry name" value="HEXAPEP_TRANSFERASES"/>
    <property type="match status" value="1"/>
</dbReference>
<evidence type="ECO:0000255" key="1">
    <source>
        <dbReference type="HAMAP-Rule" id="MF_00811"/>
    </source>
</evidence>
<proteinExistence type="inferred from homology"/>
<organism>
    <name type="scientific">Yersinia pseudotuberculosis serotype I (strain IP32953)</name>
    <dbReference type="NCBI Taxonomy" id="273123"/>
    <lineage>
        <taxon>Bacteria</taxon>
        <taxon>Pseudomonadati</taxon>
        <taxon>Pseudomonadota</taxon>
        <taxon>Gammaproteobacteria</taxon>
        <taxon>Enterobacterales</taxon>
        <taxon>Yersiniaceae</taxon>
        <taxon>Yersinia</taxon>
    </lineage>
</organism>
<keyword id="KW-0012">Acyltransferase</keyword>
<keyword id="KW-0028">Amino-acid biosynthesis</keyword>
<keyword id="KW-0963">Cytoplasm</keyword>
<keyword id="KW-0220">Diaminopimelate biosynthesis</keyword>
<keyword id="KW-0457">Lysine biosynthesis</keyword>
<keyword id="KW-0677">Repeat</keyword>
<keyword id="KW-0808">Transferase</keyword>
<reference key="1">
    <citation type="journal article" date="2004" name="Proc. Natl. Acad. Sci. U.S.A.">
        <title>Insights into the evolution of Yersinia pestis through whole-genome comparison with Yersinia pseudotuberculosis.</title>
        <authorList>
            <person name="Chain P.S.G."/>
            <person name="Carniel E."/>
            <person name="Larimer F.W."/>
            <person name="Lamerdin J."/>
            <person name="Stoutland P.O."/>
            <person name="Regala W.M."/>
            <person name="Georgescu A.M."/>
            <person name="Vergez L.M."/>
            <person name="Land M.L."/>
            <person name="Motin V.L."/>
            <person name="Brubaker R.R."/>
            <person name="Fowler J."/>
            <person name="Hinnebusch J."/>
            <person name="Marceau M."/>
            <person name="Medigue C."/>
            <person name="Simonet M."/>
            <person name="Chenal-Francisque V."/>
            <person name="Souza B."/>
            <person name="Dacheux D."/>
            <person name="Elliott J.M."/>
            <person name="Derbise A."/>
            <person name="Hauser L.J."/>
            <person name="Garcia E."/>
        </authorList>
    </citation>
    <scope>NUCLEOTIDE SEQUENCE [LARGE SCALE GENOMIC DNA]</scope>
    <source>
        <strain>IP32953</strain>
    </source>
</reference>
<comment type="catalytic activity">
    <reaction evidence="1">
        <text>(S)-2,3,4,5-tetrahydrodipicolinate + succinyl-CoA + H2O = (S)-2-succinylamino-6-oxoheptanedioate + CoA</text>
        <dbReference type="Rhea" id="RHEA:17325"/>
        <dbReference type="ChEBI" id="CHEBI:15377"/>
        <dbReference type="ChEBI" id="CHEBI:15685"/>
        <dbReference type="ChEBI" id="CHEBI:16845"/>
        <dbReference type="ChEBI" id="CHEBI:57287"/>
        <dbReference type="ChEBI" id="CHEBI:57292"/>
        <dbReference type="EC" id="2.3.1.117"/>
    </reaction>
</comment>
<comment type="pathway">
    <text evidence="1">Amino-acid biosynthesis; L-lysine biosynthesis via DAP pathway; LL-2,6-diaminopimelate from (S)-tetrahydrodipicolinate (succinylase route): step 1/3.</text>
</comment>
<comment type="subunit">
    <text evidence="1">Homotrimer.</text>
</comment>
<comment type="subcellular location">
    <subcellularLocation>
        <location evidence="1">Cytoplasm</location>
    </subcellularLocation>
</comment>
<comment type="similarity">
    <text evidence="1">Belongs to the transferase hexapeptide repeat family.</text>
</comment>
<accession>Q667I6</accession>
<protein>
    <recommendedName>
        <fullName evidence="1">2,3,4,5-tetrahydropyridine-2,6-dicarboxylate N-succinyltransferase</fullName>
        <ecNumber evidence="1">2.3.1.117</ecNumber>
    </recommendedName>
    <alternativeName>
        <fullName evidence="1">Tetrahydrodipicolinate N-succinyltransferase</fullName>
        <shortName evidence="1">THDP succinyltransferase</shortName>
        <shortName evidence="1">THP succinyltransferase</shortName>
        <shortName evidence="1">Tetrahydropicolinate succinylase</shortName>
    </alternativeName>
</protein>